<reference key="1">
    <citation type="journal article" date="2009" name="PLoS ONE">
        <title>Non mycobacterial virulence genes in the genome of the emerging pathogen Mycobacterium abscessus.</title>
        <authorList>
            <person name="Ripoll F."/>
            <person name="Pasek S."/>
            <person name="Schenowitz C."/>
            <person name="Dossat C."/>
            <person name="Barbe V."/>
            <person name="Rottman M."/>
            <person name="Macheras E."/>
            <person name="Heym B."/>
            <person name="Herrmann J.L."/>
            <person name="Daffe M."/>
            <person name="Brosch R."/>
            <person name="Risler J.L."/>
            <person name="Gaillard J.L."/>
        </authorList>
    </citation>
    <scope>NUCLEOTIDE SEQUENCE [LARGE SCALE GENOMIC DNA]</scope>
    <source>
        <strain>ATCC 19977 / DSM 44196 / CCUG 20993 / CIP 104536 / JCM 13569 / NCTC 13031 / TMC 1543 / L948</strain>
    </source>
</reference>
<feature type="chain" id="PRO_1000097972" description="ATP-dependent Clp protease ATP-binding subunit ClpX">
    <location>
        <begin position="1"/>
        <end position="426"/>
    </location>
</feature>
<feature type="domain" description="ClpX-type ZB" evidence="2">
    <location>
        <begin position="1"/>
        <end position="54"/>
    </location>
</feature>
<feature type="binding site" evidence="2">
    <location>
        <position position="13"/>
    </location>
    <ligand>
        <name>Zn(2+)</name>
        <dbReference type="ChEBI" id="CHEBI:29105"/>
    </ligand>
</feature>
<feature type="binding site" evidence="2">
    <location>
        <position position="16"/>
    </location>
    <ligand>
        <name>Zn(2+)</name>
        <dbReference type="ChEBI" id="CHEBI:29105"/>
    </ligand>
</feature>
<feature type="binding site" evidence="2">
    <location>
        <position position="35"/>
    </location>
    <ligand>
        <name>Zn(2+)</name>
        <dbReference type="ChEBI" id="CHEBI:29105"/>
    </ligand>
</feature>
<feature type="binding site" evidence="2">
    <location>
        <position position="38"/>
    </location>
    <ligand>
        <name>Zn(2+)</name>
        <dbReference type="ChEBI" id="CHEBI:29105"/>
    </ligand>
</feature>
<feature type="binding site" evidence="1">
    <location>
        <begin position="122"/>
        <end position="129"/>
    </location>
    <ligand>
        <name>ATP</name>
        <dbReference type="ChEBI" id="CHEBI:30616"/>
    </ligand>
</feature>
<dbReference type="EMBL" id="CU458896">
    <property type="protein sequence ID" value="CAM61668.1"/>
    <property type="molecule type" value="Genomic_DNA"/>
</dbReference>
<dbReference type="RefSeq" id="WP_005060151.1">
    <property type="nucleotide sequence ID" value="NZ_MLCG01000002.1"/>
</dbReference>
<dbReference type="SMR" id="B1MMV6"/>
<dbReference type="GeneID" id="93378535"/>
<dbReference type="KEGG" id="mab:MAB_1583"/>
<dbReference type="Proteomes" id="UP000007137">
    <property type="component" value="Chromosome"/>
</dbReference>
<dbReference type="GO" id="GO:0009376">
    <property type="term" value="C:HslUV protease complex"/>
    <property type="evidence" value="ECO:0007669"/>
    <property type="project" value="TreeGrafter"/>
</dbReference>
<dbReference type="GO" id="GO:0005524">
    <property type="term" value="F:ATP binding"/>
    <property type="evidence" value="ECO:0007669"/>
    <property type="project" value="UniProtKB-UniRule"/>
</dbReference>
<dbReference type="GO" id="GO:0016887">
    <property type="term" value="F:ATP hydrolysis activity"/>
    <property type="evidence" value="ECO:0007669"/>
    <property type="project" value="InterPro"/>
</dbReference>
<dbReference type="GO" id="GO:0140662">
    <property type="term" value="F:ATP-dependent protein folding chaperone"/>
    <property type="evidence" value="ECO:0007669"/>
    <property type="project" value="InterPro"/>
</dbReference>
<dbReference type="GO" id="GO:0046983">
    <property type="term" value="F:protein dimerization activity"/>
    <property type="evidence" value="ECO:0007669"/>
    <property type="project" value="InterPro"/>
</dbReference>
<dbReference type="GO" id="GO:0051082">
    <property type="term" value="F:unfolded protein binding"/>
    <property type="evidence" value="ECO:0007669"/>
    <property type="project" value="UniProtKB-UniRule"/>
</dbReference>
<dbReference type="GO" id="GO:0008270">
    <property type="term" value="F:zinc ion binding"/>
    <property type="evidence" value="ECO:0007669"/>
    <property type="project" value="InterPro"/>
</dbReference>
<dbReference type="GO" id="GO:0051301">
    <property type="term" value="P:cell division"/>
    <property type="evidence" value="ECO:0007669"/>
    <property type="project" value="TreeGrafter"/>
</dbReference>
<dbReference type="GO" id="GO:0051603">
    <property type="term" value="P:proteolysis involved in protein catabolic process"/>
    <property type="evidence" value="ECO:0007669"/>
    <property type="project" value="TreeGrafter"/>
</dbReference>
<dbReference type="CDD" id="cd19497">
    <property type="entry name" value="RecA-like_ClpX"/>
    <property type="match status" value="1"/>
</dbReference>
<dbReference type="FunFam" id="1.10.8.60:FF:000002">
    <property type="entry name" value="ATP-dependent Clp protease ATP-binding subunit ClpX"/>
    <property type="match status" value="1"/>
</dbReference>
<dbReference type="FunFam" id="3.40.50.300:FF:000005">
    <property type="entry name" value="ATP-dependent Clp protease ATP-binding subunit ClpX"/>
    <property type="match status" value="1"/>
</dbReference>
<dbReference type="Gene3D" id="1.10.8.60">
    <property type="match status" value="1"/>
</dbReference>
<dbReference type="Gene3D" id="6.20.220.10">
    <property type="entry name" value="ClpX chaperone, C4-type zinc finger domain"/>
    <property type="match status" value="1"/>
</dbReference>
<dbReference type="Gene3D" id="3.40.50.300">
    <property type="entry name" value="P-loop containing nucleotide triphosphate hydrolases"/>
    <property type="match status" value="1"/>
</dbReference>
<dbReference type="HAMAP" id="MF_00175">
    <property type="entry name" value="ClpX"/>
    <property type="match status" value="1"/>
</dbReference>
<dbReference type="InterPro" id="IPR003593">
    <property type="entry name" value="AAA+_ATPase"/>
</dbReference>
<dbReference type="InterPro" id="IPR050052">
    <property type="entry name" value="ATP-dep_Clp_protease_ClpX"/>
</dbReference>
<dbReference type="InterPro" id="IPR003959">
    <property type="entry name" value="ATPase_AAA_core"/>
</dbReference>
<dbReference type="InterPro" id="IPR019489">
    <property type="entry name" value="Clp_ATPase_C"/>
</dbReference>
<dbReference type="InterPro" id="IPR004487">
    <property type="entry name" value="Clp_protease_ATP-bd_su_ClpX"/>
</dbReference>
<dbReference type="InterPro" id="IPR046425">
    <property type="entry name" value="ClpX_bact"/>
</dbReference>
<dbReference type="InterPro" id="IPR027417">
    <property type="entry name" value="P-loop_NTPase"/>
</dbReference>
<dbReference type="InterPro" id="IPR010603">
    <property type="entry name" value="Znf_CppX_C4"/>
</dbReference>
<dbReference type="InterPro" id="IPR038366">
    <property type="entry name" value="Znf_CppX_C4_sf"/>
</dbReference>
<dbReference type="NCBIfam" id="TIGR00382">
    <property type="entry name" value="clpX"/>
    <property type="match status" value="1"/>
</dbReference>
<dbReference type="NCBIfam" id="NF003745">
    <property type="entry name" value="PRK05342.1"/>
    <property type="match status" value="1"/>
</dbReference>
<dbReference type="PANTHER" id="PTHR48102:SF7">
    <property type="entry name" value="ATP-DEPENDENT CLP PROTEASE ATP-BINDING SUBUNIT CLPX-LIKE, MITOCHONDRIAL"/>
    <property type="match status" value="1"/>
</dbReference>
<dbReference type="PANTHER" id="PTHR48102">
    <property type="entry name" value="ATP-DEPENDENT CLP PROTEASE ATP-BINDING SUBUNIT CLPX-LIKE, MITOCHONDRIAL-RELATED"/>
    <property type="match status" value="1"/>
</dbReference>
<dbReference type="Pfam" id="PF07724">
    <property type="entry name" value="AAA_2"/>
    <property type="match status" value="1"/>
</dbReference>
<dbReference type="Pfam" id="PF10431">
    <property type="entry name" value="ClpB_D2-small"/>
    <property type="match status" value="1"/>
</dbReference>
<dbReference type="Pfam" id="PF06689">
    <property type="entry name" value="zf-C4_ClpX"/>
    <property type="match status" value="1"/>
</dbReference>
<dbReference type="SMART" id="SM00382">
    <property type="entry name" value="AAA"/>
    <property type="match status" value="1"/>
</dbReference>
<dbReference type="SMART" id="SM01086">
    <property type="entry name" value="ClpB_D2-small"/>
    <property type="match status" value="1"/>
</dbReference>
<dbReference type="SMART" id="SM00994">
    <property type="entry name" value="zf-C4_ClpX"/>
    <property type="match status" value="1"/>
</dbReference>
<dbReference type="SUPFAM" id="SSF57716">
    <property type="entry name" value="Glucocorticoid receptor-like (DNA-binding domain)"/>
    <property type="match status" value="1"/>
</dbReference>
<dbReference type="SUPFAM" id="SSF52540">
    <property type="entry name" value="P-loop containing nucleoside triphosphate hydrolases"/>
    <property type="match status" value="1"/>
</dbReference>
<dbReference type="PROSITE" id="PS51902">
    <property type="entry name" value="CLPX_ZB"/>
    <property type="match status" value="1"/>
</dbReference>
<organism>
    <name type="scientific">Mycobacteroides abscessus (strain ATCC 19977 / DSM 44196 / CCUG 20993 / CIP 104536 / JCM 13569 / NCTC 13031 / TMC 1543 / L948)</name>
    <name type="common">Mycobacterium abscessus</name>
    <dbReference type="NCBI Taxonomy" id="561007"/>
    <lineage>
        <taxon>Bacteria</taxon>
        <taxon>Bacillati</taxon>
        <taxon>Actinomycetota</taxon>
        <taxon>Actinomycetes</taxon>
        <taxon>Mycobacteriales</taxon>
        <taxon>Mycobacteriaceae</taxon>
        <taxon>Mycobacteroides</taxon>
        <taxon>Mycobacteroides abscessus</taxon>
    </lineage>
</organism>
<protein>
    <recommendedName>
        <fullName evidence="1">ATP-dependent Clp protease ATP-binding subunit ClpX</fullName>
    </recommendedName>
</protein>
<proteinExistence type="inferred from homology"/>
<sequence>MARIGDGGDLLKCSFCGKSQKQVKKLIAGPGVYICDECIDLCNEIIEEELADADDVKLDELPKPAEIRDFLENYVIGQDTAKKTLAVAVYNHYKRIQAGDKARDARGETVELAKSNILMLGPTGCGKTYLAQTLAKMLNVPFAIADATALTEAGYVGEDVENILLKLIQAADYDVKRAETGIIYIDEVDKIARKSENPSITRDVSGEGVQQALLKILEGTQASVPPQGGRKHPHQEFIQIDTTNVLFIVAGAFAGLEKIVSDRVGKRGLGFGAEVKSKADIDTTDHFAEVMPEDLIKFGLIPEFIGRLPIVASVTNLDRESLIKILSEPKNALVKQYTRLFEMDGVELEFSQDALEAIADQAIHRGTGARGLRAIMEEVLQPVMYDIPSRDDVAKVVVTGETVIDNVLPTIVPRKPSRTERRDKSA</sequence>
<comment type="function">
    <text evidence="1">ATP-dependent specificity component of the Clp protease. It directs the protease to specific substrates. Can perform chaperone functions in the absence of ClpP.</text>
</comment>
<comment type="subunit">
    <text evidence="1">Component of the ClpX-ClpP complex. Forms a hexameric ring that, in the presence of ATP, binds to fourteen ClpP subunits assembled into a disk-like structure with a central cavity, resembling the structure of eukaryotic proteasomes.</text>
</comment>
<comment type="similarity">
    <text evidence="1">Belongs to the ClpX chaperone family.</text>
</comment>
<gene>
    <name evidence="1" type="primary">clpX</name>
    <name type="ordered locus">MAB_1583</name>
</gene>
<evidence type="ECO:0000255" key="1">
    <source>
        <dbReference type="HAMAP-Rule" id="MF_00175"/>
    </source>
</evidence>
<evidence type="ECO:0000255" key="2">
    <source>
        <dbReference type="PROSITE-ProRule" id="PRU01250"/>
    </source>
</evidence>
<keyword id="KW-0067">ATP-binding</keyword>
<keyword id="KW-0143">Chaperone</keyword>
<keyword id="KW-0479">Metal-binding</keyword>
<keyword id="KW-0547">Nucleotide-binding</keyword>
<keyword id="KW-1185">Reference proteome</keyword>
<keyword id="KW-0862">Zinc</keyword>
<accession>B1MMV6</accession>
<name>CLPX_MYCA9</name>